<sequence length="296" mass="30950">MNMKKLATLVSAVALSATVSANAMAKDTIALVVSTLNNPFFVSLKDGAQKEADKLGYNLVVLDSQNNPAKELANVQDLTVRGTKILLINPTDSDAVGNAVKMANQANIPVITLDRQATKGEVVSHIASDNVLGGKIAGDYIAKKAGEGAKVIELQGIAGTSAARERGEGFQQAVAAHKFNVLASQPADFDRIKGLNVMQNLLTAHPDVQAVFAQNDEMALGALRALQTAGKSDVMVVGFDGTPDGEKAVNDGKLAATIAQLPDQIGAKGVETADKVLKGEKVQAKYPVDLKLVVKQ</sequence>
<protein>
    <recommendedName>
        <fullName evidence="9">Ribose import binding protein RbsB</fullName>
    </recommendedName>
</protein>
<organism>
    <name type="scientific">Escherichia coli (strain K12)</name>
    <dbReference type="NCBI Taxonomy" id="83333"/>
    <lineage>
        <taxon>Bacteria</taxon>
        <taxon>Pseudomonadati</taxon>
        <taxon>Pseudomonadota</taxon>
        <taxon>Gammaproteobacteria</taxon>
        <taxon>Enterobacterales</taxon>
        <taxon>Enterobacteriaceae</taxon>
        <taxon>Escherichia</taxon>
    </lineage>
</organism>
<comment type="function">
    <text evidence="2 3 4 5">Part of the ABC transporter complex RbsABC involved in ribose import. Binds ribose. Also serves as the primary chemoreceptor for chemotaxis.</text>
</comment>
<comment type="subunit">
    <text evidence="2">The complex is composed of an ATP-binding protein (RbsA), two transmembrane proteins (RbsC) and a solute-binding protein (RbsB).</text>
</comment>
<comment type="interaction">
    <interactant intactId="EBI-369930">
        <id>P02925</id>
    </interactant>
    <interactant intactId="EBI-552928">
        <id>P00956</id>
        <label>ileS</label>
    </interactant>
    <organismsDiffer>false</organismsDiffer>
    <experiments>3</experiments>
</comment>
<comment type="interaction">
    <interactant intactId="EBI-369930">
        <id>P02925</id>
    </interactant>
    <interactant intactId="EBI-21444614">
        <id>P0AGI1</id>
        <label>rbsC</label>
    </interactant>
    <organismsDiffer>false</organismsDiffer>
    <experiments>6</experiments>
</comment>
<comment type="subcellular location">
    <subcellularLocation>
        <location evidence="1">Periplasm</location>
    </subcellularLocation>
</comment>
<comment type="similarity">
    <text evidence="9">Belongs to the bacterial solute-binding protein 2 family.</text>
</comment>
<keyword id="KW-0002">3D-structure</keyword>
<keyword id="KW-0145">Chemotaxis</keyword>
<keyword id="KW-0903">Direct protein sequencing</keyword>
<keyword id="KW-0574">Periplasm</keyword>
<keyword id="KW-1185">Reference proteome</keyword>
<keyword id="KW-0732">Signal</keyword>
<keyword id="KW-0762">Sugar transport</keyword>
<keyword id="KW-0813">Transport</keyword>
<gene>
    <name evidence="8" type="primary">rbsB</name>
    <name type="synonym">prlB</name>
    <name type="synonym">rbsP</name>
    <name type="ordered locus">b3751</name>
    <name type="ordered locus">JW3730</name>
</gene>
<name>RBSB_ECOLI</name>
<reference key="1">
    <citation type="journal article" date="1983" name="J. Biol. Chem.">
        <title>The amino acid sequence of D-ribose-binding protein from Escherichia coli K12.</title>
        <authorList>
            <person name="Groarke J.M."/>
            <person name="Mahoney W.C."/>
            <person name="Hope J.N."/>
            <person name="Furlong C.E."/>
            <person name="Robb F.T."/>
            <person name="Zalkin H."/>
            <person name="Hermodson M.A."/>
        </authorList>
    </citation>
    <scope>NUCLEOTIDE SEQUENCE [GENOMIC DNA]</scope>
    <scope>PARTIAL PROTEIN SEQUENCE</scope>
</reference>
<reference key="2">
    <citation type="submission" date="1986-02" db="EMBL/GenBank/DDBJ databases">
        <authorList>
            <person name="Mauzy C.A."/>
        </authorList>
    </citation>
    <scope>NUCLEOTIDE SEQUENCE [GENOMIC DNA]</scope>
    <source>
        <strain>K12</strain>
    </source>
</reference>
<reference key="3">
    <citation type="journal article" date="1993" name="Genomics">
        <title>DNA sequence and analysis of 136 kilobases of the Escherichia coli genome: organizational symmetry around the origin of replication.</title>
        <authorList>
            <person name="Burland V.D."/>
            <person name="Plunkett G. III"/>
            <person name="Daniels D.L."/>
            <person name="Blattner F.R."/>
        </authorList>
    </citation>
    <scope>NUCLEOTIDE SEQUENCE [LARGE SCALE GENOMIC DNA]</scope>
    <source>
        <strain>K12 / MG1655 / ATCC 47076</strain>
    </source>
</reference>
<reference key="4">
    <citation type="journal article" date="1997" name="Science">
        <title>The complete genome sequence of Escherichia coli K-12.</title>
        <authorList>
            <person name="Blattner F.R."/>
            <person name="Plunkett G. III"/>
            <person name="Bloch C.A."/>
            <person name="Perna N.T."/>
            <person name="Burland V."/>
            <person name="Riley M."/>
            <person name="Collado-Vides J."/>
            <person name="Glasner J.D."/>
            <person name="Rode C.K."/>
            <person name="Mayhew G.F."/>
            <person name="Gregor J."/>
            <person name="Davis N.W."/>
            <person name="Kirkpatrick H.A."/>
            <person name="Goeden M.A."/>
            <person name="Rose D.J."/>
            <person name="Mau B."/>
            <person name="Shao Y."/>
        </authorList>
    </citation>
    <scope>NUCLEOTIDE SEQUENCE [LARGE SCALE GENOMIC DNA]</scope>
    <source>
        <strain>K12 / MG1655 / ATCC 47076</strain>
    </source>
</reference>
<reference key="5">
    <citation type="journal article" date="2006" name="Mol. Syst. Biol.">
        <title>Highly accurate genome sequences of Escherichia coli K-12 strains MG1655 and W3110.</title>
        <authorList>
            <person name="Hayashi K."/>
            <person name="Morooka N."/>
            <person name="Yamamoto Y."/>
            <person name="Fujita K."/>
            <person name="Isono K."/>
            <person name="Choi S."/>
            <person name="Ohtsubo E."/>
            <person name="Baba T."/>
            <person name="Wanner B.L."/>
            <person name="Mori H."/>
            <person name="Horiuchi T."/>
        </authorList>
    </citation>
    <scope>NUCLEOTIDE SEQUENCE [LARGE SCALE GENOMIC DNA]</scope>
    <source>
        <strain>K12 / W3110 / ATCC 27325 / DSM 5911</strain>
    </source>
</reference>
<reference key="6">
    <citation type="journal article" date="1986" name="J. Biol. Chem.">
        <title>The nucleotide sequences of the rbsD, rbsA, and rbsC genes of Escherichia coli K12.</title>
        <authorList>
            <person name="Bell A.W."/>
            <person name="Buckel S.D."/>
            <person name="Groarke J.M."/>
            <person name="Hope J.N."/>
            <person name="Kingsley D.H."/>
            <person name="Hermodson M.A."/>
        </authorList>
    </citation>
    <scope>NUCLEOTIDE SEQUENCE [GENOMIC DNA] OF 1-12</scope>
    <source>
        <strain>K12</strain>
    </source>
</reference>
<reference key="7">
    <citation type="journal article" date="1986" name="J. Biol. Chem.">
        <title>Ribokinase from Escherichia coli K12. Nucleotide sequence and overexpression of the rbsK gene and purification of ribokinase.</title>
        <authorList>
            <person name="Hope J.N."/>
            <person name="Bell A.W."/>
            <person name="Hermodson M.A."/>
            <person name="Groarke J.M."/>
        </authorList>
    </citation>
    <scope>NUCLEOTIDE SEQUENCE [GENOMIC DNA] OF 270-296</scope>
    <source>
        <strain>K12</strain>
    </source>
</reference>
<reference key="8">
    <citation type="journal article" date="1996" name="Mol. Microbiol.">
        <title>FIS is a regulator of metabolism in Escherichia coli.</title>
        <authorList>
            <person name="Gonzalez-Gil G."/>
            <person name="Bringmann P."/>
            <person name="Kahmann R."/>
        </authorList>
    </citation>
    <scope>PROTEIN SEQUENCE OF 26-39</scope>
    <source>
        <strain>K12</strain>
    </source>
</reference>
<reference key="9">
    <citation type="journal article" date="1997" name="Electrophoresis">
        <title>Comparing the predicted and observed properties of proteins encoded in the genome of Escherichia coli K-12.</title>
        <authorList>
            <person name="Link A.J."/>
            <person name="Robison K."/>
            <person name="Church G.M."/>
        </authorList>
    </citation>
    <scope>PROTEIN SEQUENCE OF 26-37</scope>
    <source>
        <strain>K12 / EMG2</strain>
    </source>
</reference>
<reference key="10">
    <citation type="journal article" date="1974" name="J. Biol. Chem.">
        <title>Purification and properties of a ribose-binding protein from Escherichia coli.</title>
        <authorList>
            <person name="Willis R.C."/>
            <person name="Furlong C.E."/>
        </authorList>
    </citation>
    <scope>FUNCTION</scope>
</reference>
<reference key="11">
    <citation type="journal article" date="1984" name="J. Bacteriol.">
        <title>Molecular cloning and characterization of genes required for ribose transport and utilization in Escherichia coli K-12.</title>
        <authorList>
            <person name="Iida A."/>
            <person name="Harayama S."/>
            <person name="Iino T."/>
            <person name="Hazelbauer G.L."/>
        </authorList>
    </citation>
    <scope>FUNCTION</scope>
</reference>
<reference key="12">
    <citation type="journal article" date="1997" name="Electrophoresis">
        <title>Escherichia coli proteome analysis using the gene-protein database.</title>
        <authorList>
            <person name="VanBogelen R.A."/>
            <person name="Abshire K.Z."/>
            <person name="Moldover B."/>
            <person name="Olson E.R."/>
            <person name="Neidhardt F.C."/>
        </authorList>
    </citation>
    <scope>IDENTIFICATION BY 2D-GEL</scope>
</reference>
<reference key="13">
    <citation type="journal article" date="2015" name="J. Biol. Chem.">
        <title>In vitro reassembly of the ribose ATP-binding cassette transporter reveals a distinct set of transport complexes.</title>
        <authorList>
            <person name="Clifton M.C."/>
            <person name="Simon M.J."/>
            <person name="Erramilli S.K."/>
            <person name="Zhang H."/>
            <person name="Zaitseva J."/>
            <person name="Hermodson M.A."/>
            <person name="Stauffacher C.V."/>
        </authorList>
    </citation>
    <scope>FUNCTION</scope>
    <scope>SUBUNIT</scope>
</reference>
<reference key="14">
    <citation type="journal article" date="1992" name="J. Mol. Biol.">
        <title>1.7-A X-ray structure of the periplasmic ribose receptor from Escherichia coli.</title>
        <authorList>
            <person name="Mowbray S.L."/>
            <person name="Cole L.B."/>
        </authorList>
    </citation>
    <scope>X-RAY CRYSTALLOGRAPHY (1.7 ANGSTROMS)</scope>
    <scope>SUBCELLULAR LOCATION</scope>
</reference>
<reference key="15">
    <citation type="journal article" date="1994" name="J. Biol. Chem.">
        <title>Probing protein-protein interactions. The ribose-binding protein in bacterial transport and chemotaxis.</title>
        <authorList>
            <person name="Bjoerkman A.J."/>
            <person name="Binnie R.A."/>
            <person name="Zhang H."/>
            <person name="Cole L.B."/>
            <person name="Hermodson M.A."/>
            <person name="Mowbray S.L."/>
        </authorList>
    </citation>
    <scope>X-RAY CRYSTALLOGRAPHY (2.5 ANGSTROMS)</scope>
    <scope>FUNCTION</scope>
</reference>
<reference key="16">
    <citation type="journal article" date="1998" name="J. Mol. Biol.">
        <title>Multiple open forms of ribose-binding protein trace the path of its conformational change.</title>
        <authorList>
            <person name="Bjoerkman A.J."/>
            <person name="Mowbray S.L."/>
        </authorList>
    </citation>
    <scope>X-RAY CRYSTALLOGRAPHY (2.3 ANGSTROMS)</scope>
</reference>
<accession>P02925</accession>
<accession>Q2M869</accession>
<feature type="signal peptide" evidence="6 7">
    <location>
        <begin position="1"/>
        <end position="25"/>
    </location>
</feature>
<feature type="chain" id="PRO_0000031732" description="Ribose import binding protein RbsB">
    <location>
        <begin position="26"/>
        <end position="296"/>
    </location>
</feature>
<feature type="strand" evidence="10">
    <location>
        <begin position="28"/>
        <end position="34"/>
    </location>
</feature>
<feature type="strand" evidence="10">
    <location>
        <begin position="36"/>
        <end position="38"/>
    </location>
</feature>
<feature type="helix" evidence="10">
    <location>
        <begin position="39"/>
        <end position="55"/>
    </location>
</feature>
<feature type="strand" evidence="10">
    <location>
        <begin position="58"/>
        <end position="63"/>
    </location>
</feature>
<feature type="helix" evidence="10">
    <location>
        <begin position="68"/>
        <end position="78"/>
    </location>
</feature>
<feature type="turn" evidence="10">
    <location>
        <begin position="79"/>
        <end position="82"/>
    </location>
</feature>
<feature type="strand" evidence="10">
    <location>
        <begin position="83"/>
        <end position="88"/>
    </location>
</feature>
<feature type="turn" evidence="10">
    <location>
        <begin position="93"/>
        <end position="96"/>
    </location>
</feature>
<feature type="helix" evidence="10">
    <location>
        <begin position="97"/>
        <end position="105"/>
    </location>
</feature>
<feature type="strand" evidence="10">
    <location>
        <begin position="110"/>
        <end position="115"/>
    </location>
</feature>
<feature type="strand" evidence="10">
    <location>
        <begin position="118"/>
        <end position="120"/>
    </location>
</feature>
<feature type="strand" evidence="10">
    <location>
        <begin position="123"/>
        <end position="128"/>
    </location>
</feature>
<feature type="helix" evidence="10">
    <location>
        <begin position="130"/>
        <end position="145"/>
    </location>
</feature>
<feature type="strand" evidence="10">
    <location>
        <begin position="150"/>
        <end position="155"/>
    </location>
</feature>
<feature type="helix" evidence="10">
    <location>
        <begin position="161"/>
        <end position="177"/>
    </location>
</feature>
<feature type="strand" evidence="10">
    <location>
        <begin position="180"/>
        <end position="186"/>
    </location>
</feature>
<feature type="helix" evidence="10">
    <location>
        <begin position="191"/>
        <end position="204"/>
    </location>
</feature>
<feature type="strand" evidence="10">
    <location>
        <begin position="210"/>
        <end position="215"/>
    </location>
</feature>
<feature type="helix" evidence="10">
    <location>
        <begin position="216"/>
        <end position="229"/>
    </location>
</feature>
<feature type="strand" evidence="10">
    <location>
        <begin position="235"/>
        <end position="240"/>
    </location>
</feature>
<feature type="helix" evidence="10">
    <location>
        <begin position="243"/>
        <end position="250"/>
    </location>
</feature>
<feature type="strand" evidence="10">
    <location>
        <begin position="256"/>
        <end position="259"/>
    </location>
</feature>
<feature type="helix" evidence="10">
    <location>
        <begin position="262"/>
        <end position="277"/>
    </location>
</feature>
<feature type="strand" evidence="10">
    <location>
        <begin position="284"/>
        <end position="288"/>
    </location>
</feature>
<feature type="strand" evidence="10">
    <location>
        <begin position="291"/>
        <end position="293"/>
    </location>
</feature>
<proteinExistence type="evidence at protein level"/>
<evidence type="ECO:0000269" key="1">
    <source>
    </source>
</evidence>
<evidence type="ECO:0000269" key="2">
    <source>
    </source>
</evidence>
<evidence type="ECO:0000269" key="3">
    <source>
    </source>
</evidence>
<evidence type="ECO:0000269" key="4">
    <source>
    </source>
</evidence>
<evidence type="ECO:0000269" key="5">
    <source>
    </source>
</evidence>
<evidence type="ECO:0000269" key="6">
    <source>
    </source>
</evidence>
<evidence type="ECO:0000269" key="7">
    <source>
    </source>
</evidence>
<evidence type="ECO:0000303" key="8">
    <source>
    </source>
</evidence>
<evidence type="ECO:0000305" key="9"/>
<evidence type="ECO:0007829" key="10">
    <source>
        <dbReference type="PDB" id="2DRI"/>
    </source>
</evidence>
<dbReference type="EMBL" id="K00511">
    <property type="protein sequence ID" value="AAA50966.1"/>
    <property type="molecule type" value="Genomic_DNA"/>
</dbReference>
<dbReference type="EMBL" id="M13169">
    <property type="protein sequence ID" value="AAA51475.1"/>
    <property type="molecule type" value="Genomic_DNA"/>
</dbReference>
<dbReference type="EMBL" id="L10328">
    <property type="protein sequence ID" value="AAA62104.1"/>
    <property type="molecule type" value="Genomic_DNA"/>
</dbReference>
<dbReference type="EMBL" id="U00096">
    <property type="protein sequence ID" value="AAC76774.1"/>
    <property type="molecule type" value="Genomic_DNA"/>
</dbReference>
<dbReference type="EMBL" id="AP009048">
    <property type="protein sequence ID" value="BAE77537.1"/>
    <property type="molecule type" value="Genomic_DNA"/>
</dbReference>
<dbReference type="PIR" id="A03425">
    <property type="entry name" value="JGECR"/>
</dbReference>
<dbReference type="RefSeq" id="NP_418207.1">
    <property type="nucleotide sequence ID" value="NC_000913.3"/>
</dbReference>
<dbReference type="RefSeq" id="WP_001056271.1">
    <property type="nucleotide sequence ID" value="NZ_LN832404.1"/>
</dbReference>
<dbReference type="PDB" id="1BA2">
    <property type="method" value="X-ray"/>
    <property type="resolution" value="2.10 A"/>
    <property type="chains" value="A/B=26-296"/>
</dbReference>
<dbReference type="PDB" id="1DBP">
    <property type="method" value="X-ray"/>
    <property type="resolution" value="2.20 A"/>
    <property type="chains" value="A=26-296"/>
</dbReference>
<dbReference type="PDB" id="1DRJ">
    <property type="method" value="X-ray"/>
    <property type="resolution" value="2.50 A"/>
    <property type="chains" value="A=26-296"/>
</dbReference>
<dbReference type="PDB" id="1DRK">
    <property type="method" value="X-ray"/>
    <property type="resolution" value="2.00 A"/>
    <property type="chains" value="A=26-296"/>
</dbReference>
<dbReference type="PDB" id="1URP">
    <property type="method" value="X-ray"/>
    <property type="resolution" value="2.30 A"/>
    <property type="chains" value="A/B/C/D=26-296"/>
</dbReference>
<dbReference type="PDB" id="2DRI">
    <property type="method" value="X-ray"/>
    <property type="resolution" value="1.60 A"/>
    <property type="chains" value="A=26-296"/>
</dbReference>
<dbReference type="PDB" id="2GX6">
    <property type="method" value="X-ray"/>
    <property type="resolution" value="1.97 A"/>
    <property type="chains" value="A=26-296"/>
</dbReference>
<dbReference type="PDBsum" id="1BA2"/>
<dbReference type="PDBsum" id="1DBP"/>
<dbReference type="PDBsum" id="1DRJ"/>
<dbReference type="PDBsum" id="1DRK"/>
<dbReference type="PDBsum" id="1URP"/>
<dbReference type="PDBsum" id="2DRI"/>
<dbReference type="PDBsum" id="2GX6"/>
<dbReference type="SASBDB" id="P02925"/>
<dbReference type="SMR" id="P02925"/>
<dbReference type="BioGRID" id="4262120">
    <property type="interactions" value="70"/>
</dbReference>
<dbReference type="BioGRID" id="852563">
    <property type="interactions" value="9"/>
</dbReference>
<dbReference type="ComplexPortal" id="CPX-4284">
    <property type="entry name" value="RbsABC ribose ABC transporter"/>
</dbReference>
<dbReference type="DIP" id="DIP-10641N"/>
<dbReference type="FunCoup" id="P02925">
    <property type="interactions" value="356"/>
</dbReference>
<dbReference type="IntAct" id="P02925">
    <property type="interactions" value="18"/>
</dbReference>
<dbReference type="MINT" id="P02925"/>
<dbReference type="STRING" id="511145.b3751"/>
<dbReference type="DrugBank" id="DB04286">
    <property type="generic name" value="beta-D-Ribopyranose"/>
</dbReference>
<dbReference type="TCDB" id="3.A.1.2.1">
    <property type="family name" value="the atp-binding cassette (abc) superfamily"/>
</dbReference>
<dbReference type="jPOST" id="P02925"/>
<dbReference type="PaxDb" id="511145-b3751"/>
<dbReference type="EnsemblBacteria" id="AAC76774">
    <property type="protein sequence ID" value="AAC76774"/>
    <property type="gene ID" value="b3751"/>
</dbReference>
<dbReference type="GeneID" id="948261"/>
<dbReference type="KEGG" id="ecj:JW3730"/>
<dbReference type="KEGG" id="eco:b3751"/>
<dbReference type="KEGG" id="ecoc:C3026_20320"/>
<dbReference type="PATRIC" id="fig|1411691.4.peg.2949"/>
<dbReference type="EchoBASE" id="EB0808"/>
<dbReference type="eggNOG" id="COG1879">
    <property type="taxonomic scope" value="Bacteria"/>
</dbReference>
<dbReference type="HOGENOM" id="CLU_037628_3_2_6"/>
<dbReference type="InParanoid" id="P02925"/>
<dbReference type="OMA" id="QAVFAHN"/>
<dbReference type="OrthoDB" id="4827464at2"/>
<dbReference type="PhylomeDB" id="P02925"/>
<dbReference type="BioCyc" id="EcoCyc:RBSB-MONOMER"/>
<dbReference type="BioCyc" id="MetaCyc:RBSB-MONOMER"/>
<dbReference type="EvolutionaryTrace" id="P02925"/>
<dbReference type="PRO" id="PR:P02925"/>
<dbReference type="Proteomes" id="UP000000625">
    <property type="component" value="Chromosome"/>
</dbReference>
<dbReference type="GO" id="GO:0055052">
    <property type="term" value="C:ATP-binding cassette (ABC) transporter complex, substrate-binding subunit-containing"/>
    <property type="evidence" value="ECO:0000353"/>
    <property type="project" value="ComplexPortal"/>
</dbReference>
<dbReference type="GO" id="GO:0016020">
    <property type="term" value="C:membrane"/>
    <property type="evidence" value="ECO:0000314"/>
    <property type="project" value="ComplexPortal"/>
</dbReference>
<dbReference type="GO" id="GO:0030288">
    <property type="term" value="C:outer membrane-bounded periplasmic space"/>
    <property type="evidence" value="ECO:0000314"/>
    <property type="project" value="EcoCyc"/>
</dbReference>
<dbReference type="GO" id="GO:0048029">
    <property type="term" value="F:monosaccharide binding"/>
    <property type="evidence" value="ECO:0000353"/>
    <property type="project" value="EcoCyc"/>
</dbReference>
<dbReference type="GO" id="GO:0015752">
    <property type="term" value="P:D-ribose transmembrane transport"/>
    <property type="evidence" value="ECO:0000314"/>
    <property type="project" value="EcoCyc"/>
</dbReference>
<dbReference type="GO" id="GO:0050918">
    <property type="term" value="P:positive chemotaxis"/>
    <property type="evidence" value="ECO:0000314"/>
    <property type="project" value="EcoCyc"/>
</dbReference>
<dbReference type="GO" id="GO:0055085">
    <property type="term" value="P:transmembrane transport"/>
    <property type="evidence" value="ECO:0000318"/>
    <property type="project" value="GO_Central"/>
</dbReference>
<dbReference type="CDD" id="cd06323">
    <property type="entry name" value="PBP1_ribose_binding"/>
    <property type="match status" value="1"/>
</dbReference>
<dbReference type="FunFam" id="3.40.50.2300:FF:000036">
    <property type="entry name" value="D-ribose ABC transporter substrate-binding protein"/>
    <property type="match status" value="1"/>
</dbReference>
<dbReference type="Gene3D" id="3.40.50.2300">
    <property type="match status" value="2"/>
</dbReference>
<dbReference type="InterPro" id="IPR028082">
    <property type="entry name" value="Peripla_BP_I"/>
</dbReference>
<dbReference type="InterPro" id="IPR025997">
    <property type="entry name" value="SBP_2_dom"/>
</dbReference>
<dbReference type="NCBIfam" id="NF007936">
    <property type="entry name" value="PRK10653.1"/>
    <property type="match status" value="1"/>
</dbReference>
<dbReference type="PANTHER" id="PTHR46847">
    <property type="entry name" value="D-ALLOSE-BINDING PERIPLASMIC PROTEIN-RELATED"/>
    <property type="match status" value="1"/>
</dbReference>
<dbReference type="PANTHER" id="PTHR46847:SF1">
    <property type="entry name" value="D-ALLOSE-BINDING PERIPLASMIC PROTEIN-RELATED"/>
    <property type="match status" value="1"/>
</dbReference>
<dbReference type="Pfam" id="PF13407">
    <property type="entry name" value="Peripla_BP_4"/>
    <property type="match status" value="1"/>
</dbReference>
<dbReference type="SUPFAM" id="SSF53822">
    <property type="entry name" value="Periplasmic binding protein-like I"/>
    <property type="match status" value="1"/>
</dbReference>